<protein>
    <recommendedName>
        <fullName>Segmentation protein Runt</fullName>
    </recommendedName>
</protein>
<gene>
    <name type="primary">RUNT</name>
</gene>
<name>RUNT_MANSE</name>
<evidence type="ECO:0000250" key="1"/>
<evidence type="ECO:0000255" key="2">
    <source>
        <dbReference type="PROSITE-ProRule" id="PRU00399"/>
    </source>
</evidence>
<feature type="chain" id="PRO_0000174665" description="Segmentation protein Runt">
    <location>
        <begin position="1" status="less than"/>
        <end position="79" status="greater than"/>
    </location>
</feature>
<feature type="domain" description="Runt" evidence="2">
    <location>
        <begin position="1" status="less than"/>
        <end position="79" status="greater than"/>
    </location>
</feature>
<feature type="non-terminal residue">
    <location>
        <position position="1"/>
    </location>
</feature>
<feature type="non-terminal residue">
    <location>
        <position position="79"/>
    </location>
</feature>
<organism>
    <name type="scientific">Manduca sexta</name>
    <name type="common">Tobacco hawkmoth</name>
    <name type="synonym">Tobacco hornworm</name>
    <dbReference type="NCBI Taxonomy" id="7130"/>
    <lineage>
        <taxon>Eukaryota</taxon>
        <taxon>Metazoa</taxon>
        <taxon>Ecdysozoa</taxon>
        <taxon>Arthropoda</taxon>
        <taxon>Hexapoda</taxon>
        <taxon>Insecta</taxon>
        <taxon>Pterygota</taxon>
        <taxon>Neoptera</taxon>
        <taxon>Endopterygota</taxon>
        <taxon>Lepidoptera</taxon>
        <taxon>Glossata</taxon>
        <taxon>Ditrysia</taxon>
        <taxon>Bombycoidea</taxon>
        <taxon>Sphingidae</taxon>
        <taxon>Sphinginae</taxon>
        <taxon>Sphingini</taxon>
        <taxon>Manduca</taxon>
    </lineage>
</organism>
<accession>Q25520</accession>
<proteinExistence type="evidence at transcript level"/>
<comment type="function">
    <text evidence="1">Plays a pivotal role in regulating the expression of other pair-rule genes such as eve, ftz, and h. Plays a role in the developmental pathways of sex determination and neurogenesis (By similarity).</text>
</comment>
<comment type="subunit">
    <text evidence="1">Heterodimer runt and brother (or big brother) proteins.</text>
</comment>
<comment type="subcellular location">
    <subcellularLocation>
        <location evidence="2">Nucleus</location>
    </subcellularLocation>
</comment>
<comment type="developmental stage">
    <text>Expressed in a series of equally spaced stripes covering the trunk anlagen in the blastoderm embryo. By late blastoderm, expressed in the head lobes.</text>
</comment>
<comment type="domain">
    <text>The runt domain is responsible for the DNA-binding properties of the alpha subunit and also mediates interaction with subunit beta. The transactivation domain is located downstream of the runt domain.</text>
</comment>
<keyword id="KW-0217">Developmental protein</keyword>
<keyword id="KW-0539">Nucleus</keyword>
<keyword id="KW-0562">Pair-rule protein</keyword>
<keyword id="KW-0709">Segmentation polarity protein</keyword>
<keyword id="KW-0804">Transcription</keyword>
<keyword id="KW-0805">Transcription regulation</keyword>
<dbReference type="EMBL" id="Z30279">
    <property type="protein sequence ID" value="CAA82953.1"/>
    <property type="molecule type" value="Genomic_DNA"/>
</dbReference>
<dbReference type="SMR" id="Q25520"/>
<dbReference type="EnsemblMetazoa" id="XM_030164453.2">
    <property type="protein sequence ID" value="XP_030020313.1"/>
    <property type="gene ID" value="LOC115440236"/>
</dbReference>
<dbReference type="OrthoDB" id="10029800at2759"/>
<dbReference type="GO" id="GO:0005634">
    <property type="term" value="C:nucleus"/>
    <property type="evidence" value="ECO:0007669"/>
    <property type="project" value="UniProtKB-SubCell"/>
</dbReference>
<dbReference type="GO" id="GO:0005524">
    <property type="term" value="F:ATP binding"/>
    <property type="evidence" value="ECO:0007669"/>
    <property type="project" value="InterPro"/>
</dbReference>
<dbReference type="GO" id="GO:0000981">
    <property type="term" value="F:DNA-binding transcription factor activity, RNA polymerase II-specific"/>
    <property type="evidence" value="ECO:0007669"/>
    <property type="project" value="TreeGrafter"/>
</dbReference>
<dbReference type="GO" id="GO:0000978">
    <property type="term" value="F:RNA polymerase II cis-regulatory region sequence-specific DNA binding"/>
    <property type="evidence" value="ECO:0007669"/>
    <property type="project" value="TreeGrafter"/>
</dbReference>
<dbReference type="GO" id="GO:0007366">
    <property type="term" value="P:periodic partitioning by pair rule gene"/>
    <property type="evidence" value="ECO:0007669"/>
    <property type="project" value="UniProtKB-KW"/>
</dbReference>
<dbReference type="GO" id="GO:0007367">
    <property type="term" value="P:segment polarity determination"/>
    <property type="evidence" value="ECO:0007669"/>
    <property type="project" value="UniProtKB-KW"/>
</dbReference>
<dbReference type="Gene3D" id="2.60.40.720">
    <property type="match status" value="1"/>
</dbReference>
<dbReference type="InterPro" id="IPR000040">
    <property type="entry name" value="AML1_Runt"/>
</dbReference>
<dbReference type="InterPro" id="IPR008967">
    <property type="entry name" value="p53-like_TF_DNA-bd_sf"/>
</dbReference>
<dbReference type="InterPro" id="IPR012346">
    <property type="entry name" value="p53/RUNT-type_TF_DNA-bd_sf"/>
</dbReference>
<dbReference type="InterPro" id="IPR013524">
    <property type="entry name" value="Runt_dom"/>
</dbReference>
<dbReference type="PANTHER" id="PTHR11950">
    <property type="entry name" value="RUNT RELATED"/>
    <property type="match status" value="1"/>
</dbReference>
<dbReference type="PANTHER" id="PTHR11950:SF31">
    <property type="entry name" value="SEGMENTATION PROTEIN RUNT"/>
    <property type="match status" value="1"/>
</dbReference>
<dbReference type="Pfam" id="PF00853">
    <property type="entry name" value="Runt"/>
    <property type="match status" value="1"/>
</dbReference>
<dbReference type="PRINTS" id="PR00967">
    <property type="entry name" value="ONCOGENEAML1"/>
</dbReference>
<dbReference type="SUPFAM" id="SSF49417">
    <property type="entry name" value="p53-like transcription factors"/>
    <property type="match status" value="1"/>
</dbReference>
<dbReference type="PROSITE" id="PS51062">
    <property type="entry name" value="RUNT"/>
    <property type="match status" value="1"/>
</dbReference>
<reference key="1">
    <citation type="journal article" date="1994" name="Proc. Natl. Acad. Sci. U.S.A.">
        <title>Drosophila mode of metamerization in the embryogenesis of the lepidopteran insect Manduca sexta.</title>
        <authorList>
            <person name="Kraft R."/>
            <person name="Jaeckle H."/>
        </authorList>
    </citation>
    <scope>NUCLEOTIDE SEQUENCE [GENOMIC DNA]</scope>
    <source>
        <tissue>Embryo</tissue>
    </source>
</reference>
<sequence>ALDDVQDGTLVTIKAGNDENVMAELRNCTAVMKNQVAKFNDLRFVGRSGRGKSFTLTITISTFPSQVATYSKAIKVTVD</sequence>